<protein>
    <recommendedName>
        <fullName evidence="1">UPF0352 protein YejL</fullName>
    </recommendedName>
</protein>
<comment type="similarity">
    <text evidence="1">Belongs to the UPF0352 family.</text>
</comment>
<dbReference type="EMBL" id="CP000038">
    <property type="protein sequence ID" value="AAZ88892.1"/>
    <property type="molecule type" value="Genomic_DNA"/>
</dbReference>
<dbReference type="RefSeq" id="WP_001135667.1">
    <property type="nucleotide sequence ID" value="NC_007384.1"/>
</dbReference>
<dbReference type="SMR" id="Q3Z020"/>
<dbReference type="KEGG" id="ssn:SSON_2243"/>
<dbReference type="HOGENOM" id="CLU_175457_0_0_6"/>
<dbReference type="Proteomes" id="UP000002529">
    <property type="component" value="Chromosome"/>
</dbReference>
<dbReference type="FunFam" id="1.10.3390.10:FF:000001">
    <property type="entry name" value="UPF0352 protein YejL"/>
    <property type="match status" value="1"/>
</dbReference>
<dbReference type="Gene3D" id="1.10.3390.10">
    <property type="entry name" value="YejL-like"/>
    <property type="match status" value="1"/>
</dbReference>
<dbReference type="HAMAP" id="MF_00816">
    <property type="entry name" value="UPF0352"/>
    <property type="match status" value="1"/>
</dbReference>
<dbReference type="InterPro" id="IPR009857">
    <property type="entry name" value="UPF0352"/>
</dbReference>
<dbReference type="InterPro" id="IPR023202">
    <property type="entry name" value="YejL_sf"/>
</dbReference>
<dbReference type="NCBIfam" id="NF010242">
    <property type="entry name" value="PRK13689.1"/>
    <property type="match status" value="1"/>
</dbReference>
<dbReference type="Pfam" id="PF07208">
    <property type="entry name" value="DUF1414"/>
    <property type="match status" value="1"/>
</dbReference>
<dbReference type="PIRSF" id="PIRSF006188">
    <property type="entry name" value="UCP006188"/>
    <property type="match status" value="1"/>
</dbReference>
<dbReference type="SUPFAM" id="SSF158651">
    <property type="entry name" value="YejL-like"/>
    <property type="match status" value="1"/>
</dbReference>
<evidence type="ECO:0000255" key="1">
    <source>
        <dbReference type="HAMAP-Rule" id="MF_00816"/>
    </source>
</evidence>
<feature type="chain" id="PRO_1000062317" description="UPF0352 protein YejL">
    <location>
        <begin position="1"/>
        <end position="75"/>
    </location>
</feature>
<accession>Q3Z020</accession>
<keyword id="KW-1185">Reference proteome</keyword>
<proteinExistence type="inferred from homology"/>
<reference key="1">
    <citation type="journal article" date="2005" name="Nucleic Acids Res.">
        <title>Genome dynamics and diversity of Shigella species, the etiologic agents of bacillary dysentery.</title>
        <authorList>
            <person name="Yang F."/>
            <person name="Yang J."/>
            <person name="Zhang X."/>
            <person name="Chen L."/>
            <person name="Jiang Y."/>
            <person name="Yan Y."/>
            <person name="Tang X."/>
            <person name="Wang J."/>
            <person name="Xiong Z."/>
            <person name="Dong J."/>
            <person name="Xue Y."/>
            <person name="Zhu Y."/>
            <person name="Xu X."/>
            <person name="Sun L."/>
            <person name="Chen S."/>
            <person name="Nie H."/>
            <person name="Peng J."/>
            <person name="Xu J."/>
            <person name="Wang Y."/>
            <person name="Yuan Z."/>
            <person name="Wen Y."/>
            <person name="Yao Z."/>
            <person name="Shen Y."/>
            <person name="Qiang B."/>
            <person name="Hou Y."/>
            <person name="Yu J."/>
            <person name="Jin Q."/>
        </authorList>
    </citation>
    <scope>NUCLEOTIDE SEQUENCE [LARGE SCALE GENOMIC DNA]</scope>
    <source>
        <strain>Ss046</strain>
    </source>
</reference>
<sequence length="75" mass="8288">MPQISRYSDEQVEQLLAELLNVLEKHKAPTDLSLMVLGNMVTNLINTSIAPAQRQAIANSFARALQSSINEDKAH</sequence>
<gene>
    <name evidence="1" type="primary">yejL</name>
    <name type="ordered locus">SSON_2243</name>
</gene>
<name>YEJL_SHISS</name>
<organism>
    <name type="scientific">Shigella sonnei (strain Ss046)</name>
    <dbReference type="NCBI Taxonomy" id="300269"/>
    <lineage>
        <taxon>Bacteria</taxon>
        <taxon>Pseudomonadati</taxon>
        <taxon>Pseudomonadota</taxon>
        <taxon>Gammaproteobacteria</taxon>
        <taxon>Enterobacterales</taxon>
        <taxon>Enterobacteriaceae</taxon>
        <taxon>Shigella</taxon>
    </lineage>
</organism>